<sequence>MKIIITGEPGVGKTTLVKKIVERLGKRAIGFWTEEVRDPETKKRTGFRIITTEGKKKIFSSKFFTSKKLVGSYGVNVQYFEELAIPILERAYREAKKDRRKVIIIDEIGKMELFSKKFRDLVRQIMHDPNVNVVATIPIRDVHPLVKEIRRLPGAVLIELTPENRDVILEDILSLLER</sequence>
<comment type="function">
    <text evidence="1 2">Has nucleotide phosphatase activity towards ATP, GTP, CTP, TTP and UTP. May hydrolyze nucleoside diphosphates with lower efficiency. Does not have kinase activity.</text>
</comment>
<comment type="catalytic activity">
    <reaction evidence="1 2">
        <text>a ribonucleoside 5'-triphosphate + H2O = a ribonucleoside 5'-diphosphate + phosphate + H(+)</text>
        <dbReference type="Rhea" id="RHEA:23680"/>
        <dbReference type="ChEBI" id="CHEBI:15377"/>
        <dbReference type="ChEBI" id="CHEBI:15378"/>
        <dbReference type="ChEBI" id="CHEBI:43474"/>
        <dbReference type="ChEBI" id="CHEBI:57930"/>
        <dbReference type="ChEBI" id="CHEBI:61557"/>
        <dbReference type="EC" id="3.6.1.15"/>
    </reaction>
</comment>
<comment type="biophysicochemical properties">
    <kinetics>
        <KM evidence="2">5.5 uM for ATP</KM>
        <KM evidence="2">45 uM for GTP</KM>
    </kinetics>
    <temperatureDependence>
        <text evidence="2">Optimum temperature is 70-80 degrees Celsius.</text>
    </temperatureDependence>
</comment>
<comment type="subunit">
    <text evidence="2 3">Monomer.</text>
</comment>
<comment type="similarity">
    <text evidence="1">Belongs to the THEP1 NTPase family.</text>
</comment>
<proteinExistence type="evidence at protein level"/>
<accession>O67322</accession>
<reference key="1">
    <citation type="journal article" date="1998" name="Nature">
        <title>The complete genome of the hyperthermophilic bacterium Aquifex aeolicus.</title>
        <authorList>
            <person name="Deckert G."/>
            <person name="Warren P.V."/>
            <person name="Gaasterland T."/>
            <person name="Young W.G."/>
            <person name="Lenox A.L."/>
            <person name="Graham D.E."/>
            <person name="Overbeek R."/>
            <person name="Snead M.A."/>
            <person name="Keller M."/>
            <person name="Aujay M."/>
            <person name="Huber R."/>
            <person name="Feldman R.A."/>
            <person name="Short J.M."/>
            <person name="Olsen G.J."/>
            <person name="Swanson R.V."/>
        </authorList>
    </citation>
    <scope>NUCLEOTIDE SEQUENCE [LARGE SCALE GENOMIC DNA]</scope>
    <source>
        <strain>VF5</strain>
    </source>
</reference>
<reference key="2">
    <citation type="journal article" date="2003" name="BMC Biochem.">
        <title>Thermophile-specific proteins: the gene product of aq_1292 from Aquifex aeolicus is an NTPase.</title>
        <authorList>
            <person name="Klinger C."/>
            <person name="Rossbach M."/>
            <person name="Howe R."/>
            <person name="Kaufmann M."/>
        </authorList>
    </citation>
    <scope>CATALYTIC ACTIVITY</scope>
    <scope>FUNCTION</scope>
    <scope>SUBUNIT</scope>
    <scope>BIOPHYSICOCHEMICAL PROPERTIES</scope>
</reference>
<reference key="3">
    <citation type="journal article" date="2005" name="BMC Struct. Biol.">
        <title>Crystal structure of THEP1 from the hyperthermophile Aquifex aeolicus: a variation of the RecA fold.</title>
        <authorList>
            <person name="Rossbach M."/>
            <person name="Daumke O."/>
            <person name="Klinger C."/>
            <person name="Wittinghofer A."/>
            <person name="Kaufmann M."/>
        </authorList>
    </citation>
    <scope>X-RAY CRYSTALLOGRAPHY (1.4 ANGSTROMS) IN COMPLEX WITH PHOSPHATE</scope>
</reference>
<protein>
    <recommendedName>
        <fullName evidence="1">Nucleoside-triphosphatase THEP1</fullName>
        <shortName evidence="1">NTPase THEP1</shortName>
        <ecNumber evidence="1">3.6.1.15</ecNumber>
    </recommendedName>
    <alternativeName>
        <fullName evidence="1">Nucleoside triphosphate phosphohydrolase</fullName>
    </alternativeName>
</protein>
<evidence type="ECO:0000255" key="1">
    <source>
        <dbReference type="HAMAP-Rule" id="MF_00796"/>
    </source>
</evidence>
<evidence type="ECO:0000269" key="2">
    <source>
    </source>
</evidence>
<evidence type="ECO:0000269" key="3">
    <source>
    </source>
</evidence>
<evidence type="ECO:0000305" key="4"/>
<evidence type="ECO:0007829" key="5">
    <source>
        <dbReference type="PDB" id="1YE8"/>
    </source>
</evidence>
<dbReference type="EC" id="3.6.1.15" evidence="1"/>
<dbReference type="EMBL" id="AE000657">
    <property type="protein sequence ID" value="AAC07294.1"/>
    <property type="molecule type" value="Genomic_DNA"/>
</dbReference>
<dbReference type="PIR" id="G70411">
    <property type="entry name" value="G70411"/>
</dbReference>
<dbReference type="RefSeq" id="NP_213886.1">
    <property type="nucleotide sequence ID" value="NC_000918.1"/>
</dbReference>
<dbReference type="RefSeq" id="WP_010880824.1">
    <property type="nucleotide sequence ID" value="NC_000918.1"/>
</dbReference>
<dbReference type="PDB" id="1YE8">
    <property type="method" value="X-ray"/>
    <property type="resolution" value="1.40 A"/>
    <property type="chains" value="A=1-178"/>
</dbReference>
<dbReference type="PDBsum" id="1YE8"/>
<dbReference type="SMR" id="O67322"/>
<dbReference type="STRING" id="224324.aq_1292"/>
<dbReference type="EnsemblBacteria" id="AAC07294">
    <property type="protein sequence ID" value="AAC07294"/>
    <property type="gene ID" value="aq_1292"/>
</dbReference>
<dbReference type="KEGG" id="aae:aq_1292"/>
<dbReference type="PATRIC" id="fig|224324.8.peg.1010"/>
<dbReference type="eggNOG" id="COG1618">
    <property type="taxonomic scope" value="Bacteria"/>
</dbReference>
<dbReference type="HOGENOM" id="CLU_103145_1_0_0"/>
<dbReference type="InParanoid" id="O67322"/>
<dbReference type="OrthoDB" id="9786803at2"/>
<dbReference type="BioCyc" id="MetaCyc:MONOMER-17884"/>
<dbReference type="EvolutionaryTrace" id="O67322"/>
<dbReference type="Proteomes" id="UP000000798">
    <property type="component" value="Chromosome"/>
</dbReference>
<dbReference type="GO" id="GO:0005524">
    <property type="term" value="F:ATP binding"/>
    <property type="evidence" value="ECO:0007669"/>
    <property type="project" value="UniProtKB-UniRule"/>
</dbReference>
<dbReference type="GO" id="GO:0016887">
    <property type="term" value="F:ATP hydrolysis activity"/>
    <property type="evidence" value="ECO:0007669"/>
    <property type="project" value="InterPro"/>
</dbReference>
<dbReference type="CDD" id="cd19482">
    <property type="entry name" value="RecA-like_Thep1"/>
    <property type="match status" value="1"/>
</dbReference>
<dbReference type="Gene3D" id="3.40.50.300">
    <property type="entry name" value="P-loop containing nucleotide triphosphate hydrolases"/>
    <property type="match status" value="1"/>
</dbReference>
<dbReference type="HAMAP" id="MF_00796">
    <property type="entry name" value="NTPase_1"/>
    <property type="match status" value="1"/>
</dbReference>
<dbReference type="InterPro" id="IPR003593">
    <property type="entry name" value="AAA+_ATPase"/>
</dbReference>
<dbReference type="InterPro" id="IPR004948">
    <property type="entry name" value="Nuc-triphosphatase_THEP1"/>
</dbReference>
<dbReference type="InterPro" id="IPR027417">
    <property type="entry name" value="P-loop_NTPase"/>
</dbReference>
<dbReference type="NCBIfam" id="NF010248">
    <property type="entry name" value="PRK13695.1"/>
    <property type="match status" value="1"/>
</dbReference>
<dbReference type="PANTHER" id="PTHR43146">
    <property type="entry name" value="CANCER-RELATED NUCLEOSIDE-TRIPHOSPHATASE"/>
    <property type="match status" value="1"/>
</dbReference>
<dbReference type="PANTHER" id="PTHR43146:SF1">
    <property type="entry name" value="CANCER-RELATED NUCLEOSIDE-TRIPHOSPHATASE"/>
    <property type="match status" value="1"/>
</dbReference>
<dbReference type="Pfam" id="PF03266">
    <property type="entry name" value="NTPase_1"/>
    <property type="match status" value="1"/>
</dbReference>
<dbReference type="SMART" id="SM00382">
    <property type="entry name" value="AAA"/>
    <property type="match status" value="1"/>
</dbReference>
<dbReference type="SUPFAM" id="SSF52540">
    <property type="entry name" value="P-loop containing nucleoside triphosphate hydrolases"/>
    <property type="match status" value="1"/>
</dbReference>
<keyword id="KW-0002">3D-structure</keyword>
<keyword id="KW-0067">ATP-binding</keyword>
<keyword id="KW-0378">Hydrolase</keyword>
<keyword id="KW-0547">Nucleotide-binding</keyword>
<keyword id="KW-1185">Reference proteome</keyword>
<feature type="chain" id="PRO_0000146709" description="Nucleoside-triphosphatase THEP1">
    <location>
        <begin position="1"/>
        <end position="178"/>
    </location>
</feature>
<feature type="binding site" evidence="4">
    <location>
        <begin position="7"/>
        <end position="14"/>
    </location>
    <ligand>
        <name>ATP</name>
        <dbReference type="ChEBI" id="CHEBI:30616"/>
    </ligand>
</feature>
<feature type="binding site" evidence="1">
    <location>
        <begin position="102"/>
        <end position="109"/>
    </location>
    <ligand>
        <name>ATP</name>
        <dbReference type="ChEBI" id="CHEBI:30616"/>
    </ligand>
</feature>
<feature type="strand" evidence="5">
    <location>
        <begin position="2"/>
        <end position="6"/>
    </location>
</feature>
<feature type="helix" evidence="5">
    <location>
        <begin position="13"/>
        <end position="24"/>
    </location>
</feature>
<feature type="helix" evidence="5">
    <location>
        <begin position="25"/>
        <end position="27"/>
    </location>
</feature>
<feature type="strand" evidence="5">
    <location>
        <begin position="28"/>
        <end position="36"/>
    </location>
</feature>
<feature type="strand" evidence="5">
    <location>
        <begin position="46"/>
        <end position="51"/>
    </location>
</feature>
<feature type="strand" evidence="5">
    <location>
        <begin position="56"/>
        <end position="61"/>
    </location>
</feature>
<feature type="strand" evidence="5">
    <location>
        <begin position="67"/>
        <end position="70"/>
    </location>
</feature>
<feature type="strand" evidence="5">
    <location>
        <begin position="73"/>
        <end position="75"/>
    </location>
</feature>
<feature type="helix" evidence="5">
    <location>
        <begin position="77"/>
        <end position="97"/>
    </location>
</feature>
<feature type="strand" evidence="5">
    <location>
        <begin position="102"/>
        <end position="105"/>
    </location>
</feature>
<feature type="helix" evidence="5">
    <location>
        <begin position="112"/>
        <end position="114"/>
    </location>
</feature>
<feature type="helix" evidence="5">
    <location>
        <begin position="116"/>
        <end position="126"/>
    </location>
</feature>
<feature type="strand" evidence="5">
    <location>
        <begin position="131"/>
        <end position="136"/>
    </location>
</feature>
<feature type="helix" evidence="5">
    <location>
        <begin position="144"/>
        <end position="150"/>
    </location>
</feature>
<feature type="strand" evidence="5">
    <location>
        <begin position="156"/>
        <end position="159"/>
    </location>
</feature>
<feature type="turn" evidence="5">
    <location>
        <begin position="162"/>
        <end position="167"/>
    </location>
</feature>
<feature type="helix" evidence="5">
    <location>
        <begin position="168"/>
        <end position="175"/>
    </location>
</feature>
<organism>
    <name type="scientific">Aquifex aeolicus (strain VF5)</name>
    <dbReference type="NCBI Taxonomy" id="224324"/>
    <lineage>
        <taxon>Bacteria</taxon>
        <taxon>Pseudomonadati</taxon>
        <taxon>Aquificota</taxon>
        <taxon>Aquificia</taxon>
        <taxon>Aquificales</taxon>
        <taxon>Aquificaceae</taxon>
        <taxon>Aquifex</taxon>
    </lineage>
</organism>
<gene>
    <name type="ordered locus">aq_1292</name>
</gene>
<name>NTPTH_AQUAE</name>